<sequence>MAVTFSDLHTADGLKALEAHLAGKTYISGDGITKDDVKVFAAVPLKPSAEFPNAARWYDTVAAAVSSRFPGQASGVSASSAPAAAAPAASKDEDDDDDMDLFGDETEEDKKAAAEREAAKPAKKKESGKSSVLMDIKPWDDETDMKKLEEAVRSVQMEGLTWGASKLMPVGYGIKKLQIMLTIIDDLASTPIEEVLCEAPINEYVQSCDIVAFNKI</sequence>
<comment type="function">
    <text>EF-1-beta and EF-1-beta' stimulate the exchange of GDP bound to EF-1-alpha to GTP.</text>
</comment>
<comment type="subunit">
    <text evidence="1">EF-1 is composed of 4 subunits: alpha, beta (1B-alpha=beta'), delta (1B-beta), and gamma (1B-gamma).</text>
</comment>
<comment type="similarity">
    <text evidence="4">Belongs to the EF-1-beta/EF-1-delta family.</text>
</comment>
<accession>P29546</accession>
<name>EF1B_WHEAT</name>
<dbReference type="EMBL" id="D13147">
    <property type="protein sequence ID" value="BAA02436.1"/>
    <property type="molecule type" value="mRNA"/>
</dbReference>
<dbReference type="PIR" id="S35501">
    <property type="entry name" value="S35501"/>
</dbReference>
<dbReference type="SMR" id="P29546"/>
<dbReference type="STRING" id="4565.P29546"/>
<dbReference type="PaxDb" id="4565-Traes_2DS_C6B631387.1"/>
<dbReference type="eggNOG" id="KOG1668">
    <property type="taxonomic scope" value="Eukaryota"/>
</dbReference>
<dbReference type="Proteomes" id="UP000019116">
    <property type="component" value="Unplaced"/>
</dbReference>
<dbReference type="ExpressionAtlas" id="P29546">
    <property type="expression patterns" value="baseline and differential"/>
</dbReference>
<dbReference type="GO" id="GO:0005829">
    <property type="term" value="C:cytosol"/>
    <property type="evidence" value="ECO:0000318"/>
    <property type="project" value="GO_Central"/>
</dbReference>
<dbReference type="GO" id="GO:0005853">
    <property type="term" value="C:eukaryotic translation elongation factor 1 complex"/>
    <property type="evidence" value="ECO:0007669"/>
    <property type="project" value="InterPro"/>
</dbReference>
<dbReference type="GO" id="GO:0005085">
    <property type="term" value="F:guanyl-nucleotide exchange factor activity"/>
    <property type="evidence" value="ECO:0000318"/>
    <property type="project" value="GO_Central"/>
</dbReference>
<dbReference type="GO" id="GO:0003746">
    <property type="term" value="F:translation elongation factor activity"/>
    <property type="evidence" value="ECO:0007669"/>
    <property type="project" value="UniProtKB-KW"/>
</dbReference>
<dbReference type="GO" id="GO:0006414">
    <property type="term" value="P:translational elongation"/>
    <property type="evidence" value="ECO:0000318"/>
    <property type="project" value="GO_Central"/>
</dbReference>
<dbReference type="CDD" id="cd00292">
    <property type="entry name" value="EF1B"/>
    <property type="match status" value="1"/>
</dbReference>
<dbReference type="FunFam" id="3.30.70.60:FF:000001">
    <property type="entry name" value="Elongation factor 1-beta 1 like"/>
    <property type="match status" value="1"/>
</dbReference>
<dbReference type="Gene3D" id="1.20.1050.10">
    <property type="match status" value="1"/>
</dbReference>
<dbReference type="Gene3D" id="3.30.70.60">
    <property type="match status" value="1"/>
</dbReference>
<dbReference type="InterPro" id="IPR036219">
    <property type="entry name" value="eEF-1beta-like_sf"/>
</dbReference>
<dbReference type="InterPro" id="IPR049720">
    <property type="entry name" value="EF1B_bsu/dsu"/>
</dbReference>
<dbReference type="InterPro" id="IPR014038">
    <property type="entry name" value="EF1B_bsu/dsu_GNE"/>
</dbReference>
<dbReference type="InterPro" id="IPR036282">
    <property type="entry name" value="Glutathione-S-Trfase_C_sf"/>
</dbReference>
<dbReference type="InterPro" id="IPR014717">
    <property type="entry name" value="Transl_elong_EF1B/ribsomal_bS6"/>
</dbReference>
<dbReference type="InterPro" id="IPR001326">
    <property type="entry name" value="Transl_elong_EF1B_B/D_CS"/>
</dbReference>
<dbReference type="PANTHER" id="PTHR11595">
    <property type="entry name" value="EF-HAND AND COILED-COIL DOMAIN-CONTAINING FAMILY MEMBER"/>
    <property type="match status" value="1"/>
</dbReference>
<dbReference type="PANTHER" id="PTHR11595:SF84">
    <property type="entry name" value="ELONGATION FACTOR 1-BETA 1"/>
    <property type="match status" value="1"/>
</dbReference>
<dbReference type="Pfam" id="PF00736">
    <property type="entry name" value="EF1_GNE"/>
    <property type="match status" value="1"/>
</dbReference>
<dbReference type="SMART" id="SM00888">
    <property type="entry name" value="EF1_GNE"/>
    <property type="match status" value="1"/>
</dbReference>
<dbReference type="SUPFAM" id="SSF54984">
    <property type="entry name" value="eEF-1beta-like"/>
    <property type="match status" value="1"/>
</dbReference>
<dbReference type="SUPFAM" id="SSF47616">
    <property type="entry name" value="GST C-terminal domain-like"/>
    <property type="match status" value="1"/>
</dbReference>
<dbReference type="PROSITE" id="PS00824">
    <property type="entry name" value="EF1BD_1"/>
    <property type="match status" value="1"/>
</dbReference>
<dbReference type="PROSITE" id="PS00825">
    <property type="entry name" value="EF1BD_2"/>
    <property type="match status" value="1"/>
</dbReference>
<keyword id="KW-0903">Direct protein sequencing</keyword>
<keyword id="KW-0251">Elongation factor</keyword>
<keyword id="KW-0648">Protein biosynthesis</keyword>
<keyword id="KW-1185">Reference proteome</keyword>
<proteinExistence type="evidence at protein level"/>
<evidence type="ECO:0000250" key="1"/>
<evidence type="ECO:0000256" key="2">
    <source>
        <dbReference type="SAM" id="MobiDB-lite"/>
    </source>
</evidence>
<evidence type="ECO:0000269" key="3">
    <source>
    </source>
</evidence>
<evidence type="ECO:0000305" key="4"/>
<organism>
    <name type="scientific">Triticum aestivum</name>
    <name type="common">Wheat</name>
    <dbReference type="NCBI Taxonomy" id="4565"/>
    <lineage>
        <taxon>Eukaryota</taxon>
        <taxon>Viridiplantae</taxon>
        <taxon>Streptophyta</taxon>
        <taxon>Embryophyta</taxon>
        <taxon>Tracheophyta</taxon>
        <taxon>Spermatophyta</taxon>
        <taxon>Magnoliopsida</taxon>
        <taxon>Liliopsida</taxon>
        <taxon>Poales</taxon>
        <taxon>Poaceae</taxon>
        <taxon>BOP clade</taxon>
        <taxon>Pooideae</taxon>
        <taxon>Triticodae</taxon>
        <taxon>Triticeae</taxon>
        <taxon>Triticinae</taxon>
        <taxon>Triticum</taxon>
    </lineage>
</organism>
<reference key="1">
    <citation type="journal article" date="1992" name="Nucleic Acids Res.">
        <title>Nucleotide sequences of the cDNA encoding wheat elongation factor 1 beta'.</title>
        <authorList>
            <person name="Oizumi N."/>
            <person name="Matsumoto S."/>
            <person name="Taira H."/>
            <person name="Ejiri S."/>
        </authorList>
    </citation>
    <scope>NUCLEOTIDE SEQUENCE [MRNA]</scope>
    <scope>PROTEIN SEQUENCE OF 2-29 AND 130-166</scope>
</reference>
<feature type="initiator methionine" description="Removed" evidence="3">
    <location>
        <position position="1"/>
    </location>
</feature>
<feature type="chain" id="PRO_0000155034" description="Elongation factor 1-beta">
    <location>
        <begin position="2"/>
        <end position="216"/>
    </location>
</feature>
<feature type="region of interest" description="Disordered" evidence="2">
    <location>
        <begin position="71"/>
        <end position="131"/>
    </location>
</feature>
<feature type="compositionally biased region" description="Low complexity" evidence="2">
    <location>
        <begin position="73"/>
        <end position="89"/>
    </location>
</feature>
<feature type="compositionally biased region" description="Acidic residues" evidence="2">
    <location>
        <begin position="92"/>
        <end position="107"/>
    </location>
</feature>
<feature type="compositionally biased region" description="Basic and acidic residues" evidence="2">
    <location>
        <begin position="108"/>
        <end position="128"/>
    </location>
</feature>
<protein>
    <recommendedName>
        <fullName>Elongation factor 1-beta</fullName>
        <shortName>EF-1-beta</shortName>
    </recommendedName>
    <alternativeName>
        <fullName>Elongation factor 1-beta'</fullName>
        <shortName>EF-1-beta'</shortName>
    </alternativeName>
    <alternativeName>
        <fullName>Elongation factor 1B-alpha 2</fullName>
    </alternativeName>
    <alternativeName>
        <fullName>eEF-1B alpha 2</fullName>
    </alternativeName>
</protein>